<feature type="chain" id="PRO_0000330105" description="Mitochondrial division protein 1">
    <location>
        <begin position="1"/>
        <end position="654"/>
    </location>
</feature>
<feature type="repeat" description="WD 1">
    <location>
        <begin position="323"/>
        <end position="364"/>
    </location>
</feature>
<feature type="repeat" description="WD 2">
    <location>
        <begin position="365"/>
        <end position="402"/>
    </location>
</feature>
<feature type="repeat" description="WD 3">
    <location>
        <begin position="433"/>
        <end position="472"/>
    </location>
</feature>
<feature type="repeat" description="WD 4">
    <location>
        <begin position="478"/>
        <end position="535"/>
    </location>
</feature>
<feature type="repeat" description="WD 5">
    <location>
        <begin position="538"/>
        <end position="575"/>
    </location>
</feature>
<feature type="repeat" description="WD 6">
    <location>
        <begin position="577"/>
        <end position="614"/>
    </location>
</feature>
<feature type="repeat" description="WD 7">
    <location>
        <begin position="623"/>
        <end position="654"/>
    </location>
</feature>
<feature type="region of interest" description="Disordered" evidence="3">
    <location>
        <begin position="135"/>
        <end position="165"/>
    </location>
</feature>
<feature type="region of interest" description="Disordered" evidence="3">
    <location>
        <begin position="249"/>
        <end position="274"/>
    </location>
</feature>
<feature type="coiled-coil region" evidence="2">
    <location>
        <begin position="209"/>
        <end position="247"/>
    </location>
</feature>
<feature type="compositionally biased region" description="Basic residues" evidence="3">
    <location>
        <begin position="139"/>
        <end position="151"/>
    </location>
</feature>
<feature type="compositionally biased region" description="Low complexity" evidence="3">
    <location>
        <begin position="249"/>
        <end position="261"/>
    </location>
</feature>
<proteinExistence type="inferred from homology"/>
<keyword id="KW-0175">Coiled coil</keyword>
<keyword id="KW-0472">Membrane</keyword>
<keyword id="KW-0496">Mitochondrion</keyword>
<keyword id="KW-1000">Mitochondrion outer membrane</keyword>
<keyword id="KW-1185">Reference proteome</keyword>
<keyword id="KW-0677">Repeat</keyword>
<keyword id="KW-0853">WD repeat</keyword>
<reference key="1">
    <citation type="journal article" date="2005" name="Nature">
        <title>Sequencing of Aspergillus nidulans and comparative analysis with A. fumigatus and A. oryzae.</title>
        <authorList>
            <person name="Galagan J.E."/>
            <person name="Calvo S.E."/>
            <person name="Cuomo C."/>
            <person name="Ma L.-J."/>
            <person name="Wortman J.R."/>
            <person name="Batzoglou S."/>
            <person name="Lee S.-I."/>
            <person name="Bastuerkmen M."/>
            <person name="Spevak C.C."/>
            <person name="Clutterbuck J."/>
            <person name="Kapitonov V."/>
            <person name="Jurka J."/>
            <person name="Scazzocchio C."/>
            <person name="Farman M.L."/>
            <person name="Butler J."/>
            <person name="Purcell S."/>
            <person name="Harris S."/>
            <person name="Braus G.H."/>
            <person name="Draht O."/>
            <person name="Busch S."/>
            <person name="D'Enfert C."/>
            <person name="Bouchier C."/>
            <person name="Goldman G.H."/>
            <person name="Bell-Pedersen D."/>
            <person name="Griffiths-Jones S."/>
            <person name="Doonan J.H."/>
            <person name="Yu J."/>
            <person name="Vienken K."/>
            <person name="Pain A."/>
            <person name="Freitag M."/>
            <person name="Selker E.U."/>
            <person name="Archer D.B."/>
            <person name="Penalva M.A."/>
            <person name="Oakley B.R."/>
            <person name="Momany M."/>
            <person name="Tanaka T."/>
            <person name="Kumagai T."/>
            <person name="Asai K."/>
            <person name="Machida M."/>
            <person name="Nierman W.C."/>
            <person name="Denning D.W."/>
            <person name="Caddick M.X."/>
            <person name="Hynes M."/>
            <person name="Paoletti M."/>
            <person name="Fischer R."/>
            <person name="Miller B.L."/>
            <person name="Dyer P.S."/>
            <person name="Sachs M.S."/>
            <person name="Osmani S.A."/>
            <person name="Birren B.W."/>
        </authorList>
    </citation>
    <scope>NUCLEOTIDE SEQUENCE [LARGE SCALE GENOMIC DNA]</scope>
    <source>
        <strain>FGSC A4 / ATCC 38163 / CBS 112.46 / NRRL 194 / M139</strain>
    </source>
</reference>
<reference key="2">
    <citation type="journal article" date="2009" name="Fungal Genet. Biol.">
        <title>The 2008 update of the Aspergillus nidulans genome annotation: a community effort.</title>
        <authorList>
            <person name="Wortman J.R."/>
            <person name="Gilsenan J.M."/>
            <person name="Joardar V."/>
            <person name="Deegan J."/>
            <person name="Clutterbuck J."/>
            <person name="Andersen M.R."/>
            <person name="Archer D."/>
            <person name="Bencina M."/>
            <person name="Braus G."/>
            <person name="Coutinho P."/>
            <person name="von Dohren H."/>
            <person name="Doonan J."/>
            <person name="Driessen A.J."/>
            <person name="Durek P."/>
            <person name="Espeso E."/>
            <person name="Fekete E."/>
            <person name="Flipphi M."/>
            <person name="Estrada C.G."/>
            <person name="Geysens S."/>
            <person name="Goldman G."/>
            <person name="de Groot P.W."/>
            <person name="Hansen K."/>
            <person name="Harris S.D."/>
            <person name="Heinekamp T."/>
            <person name="Helmstaedt K."/>
            <person name="Henrissat B."/>
            <person name="Hofmann G."/>
            <person name="Homan T."/>
            <person name="Horio T."/>
            <person name="Horiuchi H."/>
            <person name="James S."/>
            <person name="Jones M."/>
            <person name="Karaffa L."/>
            <person name="Karanyi Z."/>
            <person name="Kato M."/>
            <person name="Keller N."/>
            <person name="Kelly D.E."/>
            <person name="Kiel J.A."/>
            <person name="Kim J.M."/>
            <person name="van der Klei I.J."/>
            <person name="Klis F.M."/>
            <person name="Kovalchuk A."/>
            <person name="Krasevec N."/>
            <person name="Kubicek C.P."/>
            <person name="Liu B."/>
            <person name="Maccabe A."/>
            <person name="Meyer V."/>
            <person name="Mirabito P."/>
            <person name="Miskei M."/>
            <person name="Mos M."/>
            <person name="Mullins J."/>
            <person name="Nelson D.R."/>
            <person name="Nielsen J."/>
            <person name="Oakley B.R."/>
            <person name="Osmani S.A."/>
            <person name="Pakula T."/>
            <person name="Paszewski A."/>
            <person name="Paulsen I."/>
            <person name="Pilsyk S."/>
            <person name="Pocsi I."/>
            <person name="Punt P.J."/>
            <person name="Ram A.F."/>
            <person name="Ren Q."/>
            <person name="Robellet X."/>
            <person name="Robson G."/>
            <person name="Seiboth B."/>
            <person name="van Solingen P."/>
            <person name="Specht T."/>
            <person name="Sun J."/>
            <person name="Taheri-Talesh N."/>
            <person name="Takeshita N."/>
            <person name="Ussery D."/>
            <person name="vanKuyk P.A."/>
            <person name="Visser H."/>
            <person name="van de Vondervoort P.J."/>
            <person name="de Vries R.P."/>
            <person name="Walton J."/>
            <person name="Xiang X."/>
            <person name="Xiong Y."/>
            <person name="Zeng A.P."/>
            <person name="Brandt B.W."/>
            <person name="Cornell M.J."/>
            <person name="van den Hondel C.A."/>
            <person name="Visser J."/>
            <person name="Oliver S.G."/>
            <person name="Turner G."/>
        </authorList>
    </citation>
    <scope>GENOME REANNOTATION</scope>
    <source>
        <strain>FGSC A4 / ATCC 38163 / CBS 112.46 / NRRL 194 / M139</strain>
    </source>
</reference>
<accession>Q5AXW3</accession>
<accession>C8V2P4</accession>
<dbReference type="EMBL" id="AACD01000113">
    <property type="protein sequence ID" value="EAA58266.1"/>
    <property type="status" value="ALT_SEQ"/>
    <property type="molecule type" value="Genomic_DNA"/>
</dbReference>
<dbReference type="EMBL" id="BN001301">
    <property type="protein sequence ID" value="CBF71624.1"/>
    <property type="molecule type" value="Genomic_DNA"/>
</dbReference>
<dbReference type="RefSeq" id="XP_664471.1">
    <property type="nucleotide sequence ID" value="XM_659379.1"/>
</dbReference>
<dbReference type="SMR" id="Q5AXW3"/>
<dbReference type="FunCoup" id="Q5AXW3">
    <property type="interactions" value="82"/>
</dbReference>
<dbReference type="STRING" id="227321.Q5AXW3"/>
<dbReference type="EnsemblFungi" id="CBF71624">
    <property type="protein sequence ID" value="CBF71624"/>
    <property type="gene ID" value="ANIA_06867"/>
</dbReference>
<dbReference type="VEuPathDB" id="FungiDB:AN6867"/>
<dbReference type="eggNOG" id="KOG4155">
    <property type="taxonomic scope" value="Eukaryota"/>
</dbReference>
<dbReference type="HOGENOM" id="CLU_012350_1_1_1"/>
<dbReference type="InParanoid" id="Q5AXW3"/>
<dbReference type="OMA" id="ERLRYMD"/>
<dbReference type="OrthoDB" id="496at2759"/>
<dbReference type="Proteomes" id="UP000000560">
    <property type="component" value="Chromosome I"/>
</dbReference>
<dbReference type="GO" id="GO:0005741">
    <property type="term" value="C:mitochondrial outer membrane"/>
    <property type="evidence" value="ECO:0007669"/>
    <property type="project" value="UniProtKB-SubCell"/>
</dbReference>
<dbReference type="GO" id="GO:0005739">
    <property type="term" value="C:mitochondrion"/>
    <property type="evidence" value="ECO:0000318"/>
    <property type="project" value="GO_Central"/>
</dbReference>
<dbReference type="GO" id="GO:0000266">
    <property type="term" value="P:mitochondrial fission"/>
    <property type="evidence" value="ECO:0000318"/>
    <property type="project" value="GO_Central"/>
</dbReference>
<dbReference type="GO" id="GO:0016559">
    <property type="term" value="P:peroxisome fission"/>
    <property type="evidence" value="ECO:0000318"/>
    <property type="project" value="GO_Central"/>
</dbReference>
<dbReference type="CDD" id="cd22881">
    <property type="entry name" value="Mdv1_N"/>
    <property type="match status" value="1"/>
</dbReference>
<dbReference type="CDD" id="cd00200">
    <property type="entry name" value="WD40"/>
    <property type="match status" value="1"/>
</dbReference>
<dbReference type="FunFam" id="2.130.10.10:FF:000404">
    <property type="entry name" value="Mitochondrial division protein 1"/>
    <property type="match status" value="1"/>
</dbReference>
<dbReference type="FunFam" id="2.130.10.10:FF:000881">
    <property type="entry name" value="Mitochondrial division protein 1"/>
    <property type="match status" value="1"/>
</dbReference>
<dbReference type="Gene3D" id="6.10.280.220">
    <property type="match status" value="1"/>
</dbReference>
<dbReference type="Gene3D" id="2.130.10.10">
    <property type="entry name" value="YVTN repeat-like/Quinoprotein amine dehydrogenase"/>
    <property type="match status" value="2"/>
</dbReference>
<dbReference type="InterPro" id="IPR020472">
    <property type="entry name" value="G-protein_beta_WD-40_rep"/>
</dbReference>
<dbReference type="InterPro" id="IPR015943">
    <property type="entry name" value="WD40/YVTN_repeat-like_dom_sf"/>
</dbReference>
<dbReference type="InterPro" id="IPR019775">
    <property type="entry name" value="WD40_repeat_CS"/>
</dbReference>
<dbReference type="InterPro" id="IPR036322">
    <property type="entry name" value="WD40_repeat_dom_sf"/>
</dbReference>
<dbReference type="InterPro" id="IPR001680">
    <property type="entry name" value="WD40_rpt"/>
</dbReference>
<dbReference type="PANTHER" id="PTHR19855:SF28">
    <property type="entry name" value="CCR4-ASSOCIATED FACTOR 4"/>
    <property type="match status" value="1"/>
</dbReference>
<dbReference type="PANTHER" id="PTHR19855">
    <property type="entry name" value="WD40 REPEAT PROTEIN 12, 37"/>
    <property type="match status" value="1"/>
</dbReference>
<dbReference type="Pfam" id="PF00400">
    <property type="entry name" value="WD40"/>
    <property type="match status" value="4"/>
</dbReference>
<dbReference type="PRINTS" id="PR00320">
    <property type="entry name" value="GPROTEINBRPT"/>
</dbReference>
<dbReference type="SMART" id="SM00320">
    <property type="entry name" value="WD40"/>
    <property type="match status" value="6"/>
</dbReference>
<dbReference type="SUPFAM" id="SSF50978">
    <property type="entry name" value="WD40 repeat-like"/>
    <property type="match status" value="1"/>
</dbReference>
<dbReference type="PROSITE" id="PS00678">
    <property type="entry name" value="WD_REPEATS_1"/>
    <property type="match status" value="3"/>
</dbReference>
<dbReference type="PROSITE" id="PS50082">
    <property type="entry name" value="WD_REPEATS_2"/>
    <property type="match status" value="5"/>
</dbReference>
<dbReference type="PROSITE" id="PS50294">
    <property type="entry name" value="WD_REPEATS_REGION"/>
    <property type="match status" value="1"/>
</dbReference>
<organism>
    <name type="scientific">Emericella nidulans (strain FGSC A4 / ATCC 38163 / CBS 112.46 / NRRL 194 / M139)</name>
    <name type="common">Aspergillus nidulans</name>
    <dbReference type="NCBI Taxonomy" id="227321"/>
    <lineage>
        <taxon>Eukaryota</taxon>
        <taxon>Fungi</taxon>
        <taxon>Dikarya</taxon>
        <taxon>Ascomycota</taxon>
        <taxon>Pezizomycotina</taxon>
        <taxon>Eurotiomycetes</taxon>
        <taxon>Eurotiomycetidae</taxon>
        <taxon>Eurotiales</taxon>
        <taxon>Aspergillaceae</taxon>
        <taxon>Aspergillus</taxon>
        <taxon>Aspergillus subgen. Nidulantes</taxon>
    </lineage>
</organism>
<protein>
    <recommendedName>
        <fullName>Mitochondrial division protein 1</fullName>
    </recommendedName>
</protein>
<name>MDV1_EMENI</name>
<sequence length="654" mass="72066">MDKHRRDDSPSGLSDIVERDGLLGTGITSRHIEAFGRKVTSTAGHLMGPSGDPSTSTHYQNAMVDIHRELRRPSTQRKVFALAQTTPTDLVRSKLSTSEIQSRAISSLPDELLLNIPDDTSSYSLFEGFQATQNDHEYRKAHRRGRSKGKKLLKDKDGEQADPPSTLTELKKERDLLSRRMELMGVRKNMCSSEIVDIDNKIANFHRMRQIVLDRLAGLEMEEAELEHEVNEIDNKLDDMAEEEAAQAAQAAAAAAAATTAGSETHEEPASEDPAMDASFMSESIYQKLPSPRSLKHRSIRKRSMPVLHEHFAPGSEIKEFQAHTDVVTALDLDYPFGTMITAALDDTVRVWDLNIGRCTGFLEGHNASVRCLQIEDNVVATGSMDATVKLWDLSRARTTHRDNRVNKDEDDDAVSVAYSTSLEDCHVYSLDAHVGEVTALHFKGNTLVSGSADKTLRHWDLVKGRCVQTLDVLWAAAQASSLGNESQWRPSGRLPDASADFVGAVQCFDAALACGTADGMVRLWDLRSGQVHRSLVGHTGPVSCLQFDDVHLVTGSLDRSIRIWDLRMGSIYDAYGYDKPVTSMMFDTKRIVAAAGENVVKVYDKADGHHWDCGAGVGADETGPDPAIVERVRLKDGFLIEGRRDGIVAAWTC</sequence>
<comment type="function">
    <text evidence="1">Involved in mitochondrial fission. Acts as an adapter protein required to form mitochondrial fission complexes. Formation of these complexes is required to promote constriction and fission of the mitochondrial compartment at a late step in mitochondrial division (By similarity).</text>
</comment>
<comment type="subcellular location">
    <subcellularLocation>
        <location evidence="1">Mitochondrion outer membrane</location>
        <topology evidence="1">Peripheral membrane protein</topology>
        <orientation evidence="1">Cytoplasmic side</orientation>
    </subcellularLocation>
</comment>
<comment type="similarity">
    <text evidence="4">Belongs to the WD repeat MDV1/CAF4 family.</text>
</comment>
<comment type="sequence caution" evidence="4">
    <conflict type="erroneous gene model prediction">
        <sequence resource="EMBL-CDS" id="EAA58266"/>
    </conflict>
</comment>
<gene>
    <name type="primary">mdv1</name>
    <name type="ORF">AN6867</name>
</gene>
<evidence type="ECO:0000250" key="1"/>
<evidence type="ECO:0000255" key="2"/>
<evidence type="ECO:0000256" key="3">
    <source>
        <dbReference type="SAM" id="MobiDB-lite"/>
    </source>
</evidence>
<evidence type="ECO:0000305" key="4"/>